<protein>
    <recommendedName>
        <fullName>Guanine nucleotide-binding protein alpha-1 subunit</fullName>
        <shortName>GP-alpha-1</shortName>
    </recommendedName>
</protein>
<feature type="initiator methionine" description="Removed" evidence="1">
    <location>
        <position position="1"/>
    </location>
</feature>
<feature type="chain" id="PRO_0000203626" description="Guanine nucleotide-binding protein alpha-1 subunit">
    <location>
        <begin position="2"/>
        <end position="384"/>
    </location>
</feature>
<feature type="domain" description="G-alpha" evidence="3">
    <location>
        <begin position="38"/>
        <end position="384"/>
    </location>
</feature>
<feature type="region of interest" description="G1 motif" evidence="3">
    <location>
        <begin position="41"/>
        <end position="54"/>
    </location>
</feature>
<feature type="region of interest" description="G2 motif" evidence="3">
    <location>
        <begin position="186"/>
        <end position="194"/>
    </location>
</feature>
<feature type="region of interest" description="G3 motif" evidence="3">
    <location>
        <begin position="215"/>
        <end position="224"/>
    </location>
</feature>
<feature type="region of interest" description="G4 motif" evidence="3">
    <location>
        <begin position="284"/>
        <end position="291"/>
    </location>
</feature>
<feature type="region of interest" description="G5 motif" evidence="3">
    <location>
        <begin position="354"/>
        <end position="359"/>
    </location>
</feature>
<feature type="binding site" evidence="2">
    <location>
        <position position="49"/>
    </location>
    <ligand>
        <name>GTP</name>
        <dbReference type="ChEBI" id="CHEBI:37565"/>
    </ligand>
</feature>
<feature type="binding site" evidence="2">
    <location>
        <position position="50"/>
    </location>
    <ligand>
        <name>GTP</name>
        <dbReference type="ChEBI" id="CHEBI:37565"/>
    </ligand>
</feature>
<feature type="binding site" evidence="2">
    <location>
        <position position="51"/>
    </location>
    <ligand>
        <name>GTP</name>
        <dbReference type="ChEBI" id="CHEBI:37565"/>
    </ligand>
</feature>
<feature type="binding site" evidence="2">
    <location>
        <position position="52"/>
    </location>
    <ligand>
        <name>GTP</name>
        <dbReference type="ChEBI" id="CHEBI:37565"/>
    </ligand>
</feature>
<feature type="binding site" evidence="2">
    <location>
        <position position="53"/>
    </location>
    <ligand>
        <name>GTP</name>
        <dbReference type="ChEBI" id="CHEBI:37565"/>
    </ligand>
</feature>
<feature type="binding site" evidence="2">
    <location>
        <position position="53"/>
    </location>
    <ligand>
        <name>Mg(2+)</name>
        <dbReference type="ChEBI" id="CHEBI:18420"/>
    </ligand>
</feature>
<feature type="binding site" evidence="2">
    <location>
        <position position="54"/>
    </location>
    <ligand>
        <name>GTP</name>
        <dbReference type="ChEBI" id="CHEBI:37565"/>
    </ligand>
</feature>
<feature type="binding site" evidence="2">
    <location>
        <position position="163"/>
    </location>
    <ligand>
        <name>GTP</name>
        <dbReference type="ChEBI" id="CHEBI:37565"/>
    </ligand>
</feature>
<feature type="binding site" evidence="2">
    <location>
        <position position="188"/>
    </location>
    <ligand>
        <name>GTP</name>
        <dbReference type="ChEBI" id="CHEBI:37565"/>
    </ligand>
</feature>
<feature type="binding site" evidence="2">
    <location>
        <position position="189"/>
    </location>
    <ligand>
        <name>GTP</name>
        <dbReference type="ChEBI" id="CHEBI:37565"/>
    </ligand>
</feature>
<feature type="binding site" evidence="2">
    <location>
        <position position="194"/>
    </location>
    <ligand>
        <name>GTP</name>
        <dbReference type="ChEBI" id="CHEBI:37565"/>
    </ligand>
</feature>
<feature type="binding site" evidence="2">
    <location>
        <position position="194"/>
    </location>
    <ligand>
        <name>Mg(2+)</name>
        <dbReference type="ChEBI" id="CHEBI:18420"/>
    </ligand>
</feature>
<feature type="binding site" evidence="2">
    <location>
        <position position="222"/>
    </location>
    <ligand>
        <name>GTP</name>
        <dbReference type="ChEBI" id="CHEBI:37565"/>
    </ligand>
</feature>
<feature type="binding site" evidence="2">
    <location>
        <position position="288"/>
    </location>
    <ligand>
        <name>GTP</name>
        <dbReference type="ChEBI" id="CHEBI:37565"/>
    </ligand>
</feature>
<feature type="binding site" evidence="2">
    <location>
        <position position="289"/>
    </location>
    <ligand>
        <name>GTP</name>
        <dbReference type="ChEBI" id="CHEBI:37565"/>
    </ligand>
</feature>
<feature type="binding site" evidence="2">
    <location>
        <position position="291"/>
    </location>
    <ligand>
        <name>GTP</name>
        <dbReference type="ChEBI" id="CHEBI:37565"/>
    </ligand>
</feature>
<feature type="binding site" evidence="2">
    <location>
        <position position="356"/>
    </location>
    <ligand>
        <name>GTP</name>
        <dbReference type="ChEBI" id="CHEBI:37565"/>
    </ligand>
</feature>
<feature type="lipid moiety-binding region" description="N-myristoyl glycine" evidence="2">
    <location>
        <position position="2"/>
    </location>
</feature>
<feature type="lipid moiety-binding region" description="S-palmitoyl cysteine" evidence="2">
    <location>
        <position position="5"/>
    </location>
</feature>
<feature type="sequence conflict" description="In Ref. 1; AAA99517." evidence="4" ref="1">
    <original>D</original>
    <variation>H</variation>
    <location>
        <position position="15"/>
    </location>
</feature>
<feature type="sequence conflict" description="In Ref. 1; AAA99517." evidence="4" ref="1">
    <original>K</original>
    <variation>R</variation>
    <location>
        <position position="52"/>
    </location>
</feature>
<feature type="sequence conflict" description="In Ref. 1; AAA99517." evidence="4" ref="1">
    <original>D</original>
    <variation>N</variation>
    <location>
        <position position="68"/>
    </location>
</feature>
<feature type="sequence conflict" description="In Ref. 1; AAA99517." evidence="4" ref="1">
    <original>H</original>
    <variation>Q</variation>
    <location>
        <position position="91"/>
    </location>
</feature>
<feature type="sequence conflict" description="In Ref. 1; AAA99517." evidence="4" ref="1">
    <original>E</original>
    <variation>Q</variation>
    <location>
        <position position="118"/>
    </location>
</feature>
<feature type="sequence conflict" description="In Ref. 1; AAA99517." evidence="4" ref="1">
    <original>L</original>
    <variation>M</variation>
    <location>
        <position position="143"/>
    </location>
</feature>
<feature type="sequence conflict" description="In Ref. 1; AAA99517." evidence="4" ref="1">
    <original>V</original>
    <variation>F</variation>
    <location>
        <position position="187"/>
    </location>
</feature>
<feature type="sequence conflict" description="In Ref. 1; AAA99517." evidence="4" ref="1">
    <original>A</original>
    <variation>S</variation>
    <location>
        <position position="244"/>
    </location>
</feature>
<feature type="sequence conflict" description="In Ref. 1; AAA99517." evidence="4" ref="1">
    <original>K</original>
    <variation>KH</variation>
    <location>
        <position position="309"/>
    </location>
</feature>
<feature type="sequence conflict" description="In Ref. 1; AAA99517." evidence="4" ref="1">
    <original>G</original>
    <variation>E</variation>
    <location>
        <position position="317"/>
    </location>
</feature>
<feature type="sequence conflict" description="In Ref. 1; AAA99517." evidence="4" ref="1">
    <original>L</original>
    <variation>P</variation>
    <location>
        <position position="357"/>
    </location>
</feature>
<feature type="sequence conflict" description="In Ref. 1; AAA99517." evidence="4" ref="1">
    <original>V</original>
    <variation>G</variation>
    <location>
        <position position="369"/>
    </location>
</feature>
<feature type="sequence conflict" description="In Ref. 1; AAA99517." evidence="4" ref="1">
    <original>LF</original>
    <variation>PL</variation>
    <location>
        <begin position="378"/>
        <end position="379"/>
    </location>
</feature>
<proteinExistence type="evidence at transcript level"/>
<name>GPA1_SOYBN</name>
<reference key="1">
    <citation type="journal article" date="1995" name="Plant Physiol.">
        <title>Cloning and sequencing analysis of a full-length cDNA encoding a G protein alpha subunit, SGA1, from soybean.</title>
        <authorList>
            <person name="Kim W.Y."/>
            <person name="Cheong N.E."/>
            <person name="Lee D.C."/>
            <person name="Je D.Y."/>
            <person name="Bahk J.D."/>
            <person name="Cho M.J."/>
            <person name="Lee S.Y."/>
        </authorList>
    </citation>
    <scope>NUCLEOTIDE SEQUENCE [MRNA]</scope>
    <source>
        <strain>cv. Williams</strain>
    </source>
</reference>
<reference evidence="6" key="2">
    <citation type="journal article" date="2010" name="Nature">
        <title>Genome sequence of the palaeopolyploid soybean.</title>
        <authorList>
            <person name="Schmutz J."/>
            <person name="Cannon S.B."/>
            <person name="Schlueter J."/>
            <person name="Ma J."/>
            <person name="Mitros T."/>
            <person name="Nelson W."/>
            <person name="Hyten D.L."/>
            <person name="Song Q."/>
            <person name="Thelen J.J."/>
            <person name="Cheng J."/>
            <person name="Xu D."/>
            <person name="Hellsten U."/>
            <person name="May G.D."/>
            <person name="Yu Y."/>
            <person name="Sakurai T."/>
            <person name="Umezawa T."/>
            <person name="Bhattacharyya M.K."/>
            <person name="Sandhu D."/>
            <person name="Valliyodan B."/>
            <person name="Lindquist E."/>
            <person name="Peto M."/>
            <person name="Grant D."/>
            <person name="Shu S."/>
            <person name="Goodstein D."/>
            <person name="Barry K."/>
            <person name="Futrell-Griggs M."/>
            <person name="Abernathy B."/>
            <person name="Du J."/>
            <person name="Tian Z."/>
            <person name="Zhu L."/>
            <person name="Gill N."/>
            <person name="Joshi T."/>
            <person name="Libault M."/>
            <person name="Sethuraman A."/>
            <person name="Zhang X.-C."/>
            <person name="Shinozaki K."/>
            <person name="Nguyen H.T."/>
            <person name="Wing R.A."/>
            <person name="Cregan P."/>
            <person name="Specht J."/>
            <person name="Grimwood J."/>
            <person name="Rokhsar D."/>
            <person name="Stacey G."/>
            <person name="Shoemaker R.C."/>
            <person name="Jackson S.A."/>
        </authorList>
    </citation>
    <scope>NUCLEOTIDE SEQUENCE [LARGE SCALE GENOMIC DNA]</scope>
    <source>
        <strain evidence="6">cv. Williams 82</strain>
        <tissue evidence="5">Callus</tissue>
    </source>
</reference>
<dbReference type="EMBL" id="L27418">
    <property type="protein sequence ID" value="AAA99517.1"/>
    <property type="molecule type" value="mRNA"/>
</dbReference>
<dbReference type="EMBL" id="CM000837">
    <property type="protein sequence ID" value="KRH61592.1"/>
    <property type="molecule type" value="Genomic_DNA"/>
</dbReference>
<dbReference type="EMBL" id="CM000837">
    <property type="protein sequence ID" value="KRH61593.1"/>
    <property type="molecule type" value="Genomic_DNA"/>
</dbReference>
<dbReference type="EMBL" id="CM000837">
    <property type="protein sequence ID" value="KRH61594.1"/>
    <property type="molecule type" value="Genomic_DNA"/>
</dbReference>
<dbReference type="EMBL" id="CM000837">
    <property type="protein sequence ID" value="KRH61595.1"/>
    <property type="molecule type" value="Genomic_DNA"/>
</dbReference>
<dbReference type="PIR" id="T07159">
    <property type="entry name" value="T07159"/>
</dbReference>
<dbReference type="RefSeq" id="NP_001238184.2">
    <property type="nucleotide sequence ID" value="NM_001251255.2"/>
</dbReference>
<dbReference type="RefSeq" id="XP_006577873.1">
    <property type="nucleotide sequence ID" value="XM_006577810.2"/>
</dbReference>
<dbReference type="RefSeq" id="XP_006577874.1">
    <property type="nucleotide sequence ID" value="XM_006577811.4"/>
</dbReference>
<dbReference type="RefSeq" id="XP_006577875.1">
    <property type="nucleotide sequence ID" value="XM_006577812.4"/>
</dbReference>
<dbReference type="SMR" id="P49084"/>
<dbReference type="STRING" id="3847.P49084"/>
<dbReference type="PaxDb" id="3847-GLYMA04G05960.1"/>
<dbReference type="EnsemblPlants" id="KRH61592">
    <property type="protein sequence ID" value="KRH61592"/>
    <property type="gene ID" value="GLYMA_04G056600"/>
</dbReference>
<dbReference type="EnsemblPlants" id="KRH61593">
    <property type="protein sequence ID" value="KRH61593"/>
    <property type="gene ID" value="GLYMA_04G056600"/>
</dbReference>
<dbReference type="EnsemblPlants" id="KRH61594">
    <property type="protein sequence ID" value="KRH61594"/>
    <property type="gene ID" value="GLYMA_04G056600"/>
</dbReference>
<dbReference type="EnsemblPlants" id="KRH61595">
    <property type="protein sequence ID" value="KRH61595"/>
    <property type="gene ID" value="GLYMA_04G056600"/>
</dbReference>
<dbReference type="GeneID" id="547804"/>
<dbReference type="Gramene" id="KRH61592">
    <property type="protein sequence ID" value="KRH61592"/>
    <property type="gene ID" value="GLYMA_04G056600"/>
</dbReference>
<dbReference type="Gramene" id="KRH61593">
    <property type="protein sequence ID" value="KRH61593"/>
    <property type="gene ID" value="GLYMA_04G056600"/>
</dbReference>
<dbReference type="Gramene" id="KRH61594">
    <property type="protein sequence ID" value="KRH61594"/>
    <property type="gene ID" value="GLYMA_04G056600"/>
</dbReference>
<dbReference type="Gramene" id="KRH61595">
    <property type="protein sequence ID" value="KRH61595"/>
    <property type="gene ID" value="GLYMA_04G056600"/>
</dbReference>
<dbReference type="KEGG" id="gmx:547804"/>
<dbReference type="eggNOG" id="KOG0082">
    <property type="taxonomic scope" value="Eukaryota"/>
</dbReference>
<dbReference type="HOGENOM" id="CLU_014184_4_0_1"/>
<dbReference type="InParanoid" id="P49084"/>
<dbReference type="OMA" id="EHQSEFY"/>
<dbReference type="OrthoDB" id="5817230at2759"/>
<dbReference type="Proteomes" id="UP000008827">
    <property type="component" value="Chromosome 4"/>
</dbReference>
<dbReference type="ExpressionAtlas" id="P49084">
    <property type="expression patterns" value="baseline and differential"/>
</dbReference>
<dbReference type="GO" id="GO:0005737">
    <property type="term" value="C:cytoplasm"/>
    <property type="evidence" value="ECO:0000318"/>
    <property type="project" value="GO_Central"/>
</dbReference>
<dbReference type="GO" id="GO:0005834">
    <property type="term" value="C:heterotrimeric G-protein complex"/>
    <property type="evidence" value="ECO:0000318"/>
    <property type="project" value="GO_Central"/>
</dbReference>
<dbReference type="GO" id="GO:0001664">
    <property type="term" value="F:G protein-coupled receptor binding"/>
    <property type="evidence" value="ECO:0000318"/>
    <property type="project" value="GO_Central"/>
</dbReference>
<dbReference type="GO" id="GO:0031683">
    <property type="term" value="F:G-protein beta/gamma-subunit complex binding"/>
    <property type="evidence" value="ECO:0000318"/>
    <property type="project" value="GO_Central"/>
</dbReference>
<dbReference type="GO" id="GO:0005525">
    <property type="term" value="F:GTP binding"/>
    <property type="evidence" value="ECO:0007669"/>
    <property type="project" value="UniProtKB-UniRule"/>
</dbReference>
<dbReference type="GO" id="GO:0003924">
    <property type="term" value="F:GTPase activity"/>
    <property type="evidence" value="ECO:0000318"/>
    <property type="project" value="GO_Central"/>
</dbReference>
<dbReference type="GO" id="GO:0046872">
    <property type="term" value="F:metal ion binding"/>
    <property type="evidence" value="ECO:0007669"/>
    <property type="project" value="UniProtKB-UniRule"/>
</dbReference>
<dbReference type="GO" id="GO:0007188">
    <property type="term" value="P:adenylate cyclase-modulating G protein-coupled receptor signaling pathway"/>
    <property type="evidence" value="ECO:0000318"/>
    <property type="project" value="GO_Central"/>
</dbReference>
<dbReference type="CDD" id="cd00066">
    <property type="entry name" value="G-alpha"/>
    <property type="match status" value="1"/>
</dbReference>
<dbReference type="FunFam" id="1.10.400.10:FF:000008">
    <property type="entry name" value="Guanine nucleotide-binding protein alpha-1 subunit"/>
    <property type="match status" value="1"/>
</dbReference>
<dbReference type="FunFam" id="3.40.50.300:FF:000733">
    <property type="entry name" value="Guanine nucleotide-binding protein alpha-1 subunit"/>
    <property type="match status" value="1"/>
</dbReference>
<dbReference type="Gene3D" id="1.10.400.10">
    <property type="entry name" value="GI Alpha 1, domain 2-like"/>
    <property type="match status" value="1"/>
</dbReference>
<dbReference type="Gene3D" id="3.40.50.300">
    <property type="entry name" value="P-loop containing nucleotide triphosphate hydrolases"/>
    <property type="match status" value="1"/>
</dbReference>
<dbReference type="InterPro" id="IPR001019">
    <property type="entry name" value="Gprotein_alpha_su"/>
</dbReference>
<dbReference type="InterPro" id="IPR011025">
    <property type="entry name" value="GproteinA_insert"/>
</dbReference>
<dbReference type="InterPro" id="IPR027417">
    <property type="entry name" value="P-loop_NTPase"/>
</dbReference>
<dbReference type="InterPro" id="IPR002976">
    <property type="entry name" value="Plant_Gprotein_alpha"/>
</dbReference>
<dbReference type="PANTHER" id="PTHR10218">
    <property type="entry name" value="GTP-BINDING PROTEIN ALPHA SUBUNIT"/>
    <property type="match status" value="1"/>
</dbReference>
<dbReference type="PANTHER" id="PTHR10218:SF302">
    <property type="entry name" value="GUANINE NUCLEOTIDE-BINDING PROTEIN ALPHA-5 SUBUNIT"/>
    <property type="match status" value="1"/>
</dbReference>
<dbReference type="Pfam" id="PF00503">
    <property type="entry name" value="G-alpha"/>
    <property type="match status" value="1"/>
</dbReference>
<dbReference type="PRINTS" id="PR00318">
    <property type="entry name" value="GPROTEINA"/>
</dbReference>
<dbReference type="PRINTS" id="PR01242">
    <property type="entry name" value="GPROTEINAPLT"/>
</dbReference>
<dbReference type="SMART" id="SM00275">
    <property type="entry name" value="G_alpha"/>
    <property type="match status" value="1"/>
</dbReference>
<dbReference type="SUPFAM" id="SSF52540">
    <property type="entry name" value="P-loop containing nucleoside triphosphate hydrolases"/>
    <property type="match status" value="1"/>
</dbReference>
<dbReference type="SUPFAM" id="SSF47895">
    <property type="entry name" value="Transducin (alpha subunit), insertion domain"/>
    <property type="match status" value="1"/>
</dbReference>
<dbReference type="PROSITE" id="PS51882">
    <property type="entry name" value="G_ALPHA"/>
    <property type="match status" value="1"/>
</dbReference>
<comment type="function">
    <text>Guanine nucleotide-binding proteins (G proteins) are involved as modulators or transducers in various transmembrane signaling systems.</text>
</comment>
<comment type="cofactor">
    <cofactor evidence="2">
        <name>Mg(2+)</name>
        <dbReference type="ChEBI" id="CHEBI:18420"/>
    </cofactor>
</comment>
<comment type="subunit">
    <text>G proteins are composed of 3 units; alpha, beta and gamma. The alpha chain contains the guanine nucleotide binding site.</text>
</comment>
<comment type="domain">
    <text evidence="1">The helical domain (69-189) is required for self-activation.</text>
</comment>
<comment type="similarity">
    <text evidence="4">Belongs to the G-alpha family.</text>
</comment>
<keyword id="KW-0342">GTP-binding</keyword>
<keyword id="KW-0378">Hydrolase</keyword>
<keyword id="KW-0449">Lipoprotein</keyword>
<keyword id="KW-0460">Magnesium</keyword>
<keyword id="KW-0479">Metal-binding</keyword>
<keyword id="KW-0519">Myristate</keyword>
<keyword id="KW-0547">Nucleotide-binding</keyword>
<keyword id="KW-0564">Palmitate</keyword>
<keyword id="KW-1185">Reference proteome</keyword>
<keyword id="KW-0807">Transducer</keyword>
<accession>P49084</accession>
<accession>I1JU23</accession>
<gene>
    <name type="primary">GPA1</name>
    <name type="synonym">GA1</name>
    <name evidence="5" type="ORF">GLYMA_04G056600</name>
</gene>
<evidence type="ECO:0000250" key="1"/>
<evidence type="ECO:0000250" key="2">
    <source>
        <dbReference type="UniProtKB" id="P18064"/>
    </source>
</evidence>
<evidence type="ECO:0000255" key="3">
    <source>
        <dbReference type="PROSITE-ProRule" id="PRU01230"/>
    </source>
</evidence>
<evidence type="ECO:0000305" key="4"/>
<evidence type="ECO:0000312" key="5">
    <source>
        <dbReference type="EMBL" id="KRH61592.1"/>
    </source>
</evidence>
<evidence type="ECO:0000312" key="6">
    <source>
        <dbReference type="EnsemblPlants" id="KRH61592"/>
    </source>
</evidence>
<sequence>MGLVCSRSRRFREADAEENAQDAEIERRIELETKAEKHIQKLLLLGAGESGKSTIFKQIKLLFQTGFDEAELKSYIPVVHANVYQTIKVLHDGSKELAQNDFDSSKYVISNENQDIGEKLSEIGGRLDYPRLTKELAQEIETLWEDAAIQETYARGNELQVPDCAHYFMENLERLSDANYVPTKEDVLYARVRTTGVVEIQFSPVGENKRSGEVYRLFDVGGQRNERRKWIHLFEGVTAVIFCAAISEYDQTLYEDENKNRMMETKELFEWVLRQPCFEKTSFMLFLNKFDIFEKKVLNVPLNVCEWFKDYQPVSTGKQEIEHAYEFVKKKFEELYFQSTAPDCVDRVFKIYQATALDQKLVKKTFKLVDETLRRRNLFEAGLL</sequence>
<organism>
    <name type="scientific">Glycine max</name>
    <name type="common">Soybean</name>
    <name type="synonym">Glycine hispida</name>
    <dbReference type="NCBI Taxonomy" id="3847"/>
    <lineage>
        <taxon>Eukaryota</taxon>
        <taxon>Viridiplantae</taxon>
        <taxon>Streptophyta</taxon>
        <taxon>Embryophyta</taxon>
        <taxon>Tracheophyta</taxon>
        <taxon>Spermatophyta</taxon>
        <taxon>Magnoliopsida</taxon>
        <taxon>eudicotyledons</taxon>
        <taxon>Gunneridae</taxon>
        <taxon>Pentapetalae</taxon>
        <taxon>rosids</taxon>
        <taxon>fabids</taxon>
        <taxon>Fabales</taxon>
        <taxon>Fabaceae</taxon>
        <taxon>Papilionoideae</taxon>
        <taxon>50 kb inversion clade</taxon>
        <taxon>NPAAA clade</taxon>
        <taxon>indigoferoid/millettioid clade</taxon>
        <taxon>Phaseoleae</taxon>
        <taxon>Glycine</taxon>
        <taxon>Glycine subgen. Soja</taxon>
    </lineage>
</organism>